<feature type="chain" id="PRO_1000089863" description="UPF0758 protein SPH_1181">
    <location>
        <begin position="1"/>
        <end position="226"/>
    </location>
</feature>
<feature type="domain" description="MPN" evidence="1">
    <location>
        <begin position="103"/>
        <end position="225"/>
    </location>
</feature>
<feature type="short sequence motif" description="JAMM motif" evidence="1">
    <location>
        <begin position="174"/>
        <end position="187"/>
    </location>
</feature>
<feature type="binding site" evidence="1">
    <location>
        <position position="174"/>
    </location>
    <ligand>
        <name>Zn(2+)</name>
        <dbReference type="ChEBI" id="CHEBI:29105"/>
        <note>catalytic</note>
    </ligand>
</feature>
<feature type="binding site" evidence="1">
    <location>
        <position position="176"/>
    </location>
    <ligand>
        <name>Zn(2+)</name>
        <dbReference type="ChEBI" id="CHEBI:29105"/>
        <note>catalytic</note>
    </ligand>
</feature>
<feature type="binding site" evidence="1">
    <location>
        <position position="187"/>
    </location>
    <ligand>
        <name>Zn(2+)</name>
        <dbReference type="ChEBI" id="CHEBI:29105"/>
        <note>catalytic</note>
    </ligand>
</feature>
<proteinExistence type="inferred from homology"/>
<gene>
    <name type="ordered locus">SPH_1181</name>
</gene>
<reference key="1">
    <citation type="journal article" date="2010" name="Genome Biol.">
        <title>Structure and dynamics of the pan-genome of Streptococcus pneumoniae and closely related species.</title>
        <authorList>
            <person name="Donati C."/>
            <person name="Hiller N.L."/>
            <person name="Tettelin H."/>
            <person name="Muzzi A."/>
            <person name="Croucher N.J."/>
            <person name="Angiuoli S.V."/>
            <person name="Oggioni M."/>
            <person name="Dunning Hotopp J.C."/>
            <person name="Hu F.Z."/>
            <person name="Riley D.R."/>
            <person name="Covacci A."/>
            <person name="Mitchell T.J."/>
            <person name="Bentley S.D."/>
            <person name="Kilian M."/>
            <person name="Ehrlich G.D."/>
            <person name="Rappuoli R."/>
            <person name="Moxon E.R."/>
            <person name="Masignani V."/>
        </authorList>
    </citation>
    <scope>NUCLEOTIDE SEQUENCE [LARGE SCALE GENOMIC DNA]</scope>
    <source>
        <strain>Hungary19A-6</strain>
    </source>
</reference>
<dbReference type="EMBL" id="CP000936">
    <property type="protein sequence ID" value="ACA37522.1"/>
    <property type="molecule type" value="Genomic_DNA"/>
</dbReference>
<dbReference type="SMR" id="B1IBM8"/>
<dbReference type="KEGG" id="spv:SPH_1181"/>
<dbReference type="HOGENOM" id="CLU_073529_0_2_9"/>
<dbReference type="Proteomes" id="UP000002163">
    <property type="component" value="Chromosome"/>
</dbReference>
<dbReference type="GO" id="GO:0046872">
    <property type="term" value="F:metal ion binding"/>
    <property type="evidence" value="ECO:0007669"/>
    <property type="project" value="UniProtKB-KW"/>
</dbReference>
<dbReference type="GO" id="GO:0008237">
    <property type="term" value="F:metallopeptidase activity"/>
    <property type="evidence" value="ECO:0007669"/>
    <property type="project" value="UniProtKB-KW"/>
</dbReference>
<dbReference type="GO" id="GO:0006508">
    <property type="term" value="P:proteolysis"/>
    <property type="evidence" value="ECO:0007669"/>
    <property type="project" value="UniProtKB-KW"/>
</dbReference>
<dbReference type="CDD" id="cd08071">
    <property type="entry name" value="MPN_DUF2466"/>
    <property type="match status" value="1"/>
</dbReference>
<dbReference type="Gene3D" id="3.40.140.10">
    <property type="entry name" value="Cytidine Deaminase, domain 2"/>
    <property type="match status" value="1"/>
</dbReference>
<dbReference type="InterPro" id="IPR037518">
    <property type="entry name" value="MPN"/>
</dbReference>
<dbReference type="InterPro" id="IPR025657">
    <property type="entry name" value="RadC_JAB"/>
</dbReference>
<dbReference type="InterPro" id="IPR010994">
    <property type="entry name" value="RuvA_2-like"/>
</dbReference>
<dbReference type="InterPro" id="IPR001405">
    <property type="entry name" value="UPF0758"/>
</dbReference>
<dbReference type="InterPro" id="IPR020891">
    <property type="entry name" value="UPF0758_CS"/>
</dbReference>
<dbReference type="InterPro" id="IPR046778">
    <property type="entry name" value="UPF0758_N"/>
</dbReference>
<dbReference type="NCBIfam" id="NF000642">
    <property type="entry name" value="PRK00024.1"/>
    <property type="match status" value="1"/>
</dbReference>
<dbReference type="NCBIfam" id="TIGR00608">
    <property type="entry name" value="radc"/>
    <property type="match status" value="1"/>
</dbReference>
<dbReference type="PANTHER" id="PTHR30471">
    <property type="entry name" value="DNA REPAIR PROTEIN RADC"/>
    <property type="match status" value="1"/>
</dbReference>
<dbReference type="PANTHER" id="PTHR30471:SF3">
    <property type="entry name" value="UPF0758 PROTEIN YEES-RELATED"/>
    <property type="match status" value="1"/>
</dbReference>
<dbReference type="Pfam" id="PF04002">
    <property type="entry name" value="RadC"/>
    <property type="match status" value="1"/>
</dbReference>
<dbReference type="Pfam" id="PF20582">
    <property type="entry name" value="UPF0758_N"/>
    <property type="match status" value="1"/>
</dbReference>
<dbReference type="SUPFAM" id="SSF47781">
    <property type="entry name" value="RuvA domain 2-like"/>
    <property type="match status" value="1"/>
</dbReference>
<dbReference type="PROSITE" id="PS50249">
    <property type="entry name" value="MPN"/>
    <property type="match status" value="1"/>
</dbReference>
<dbReference type="PROSITE" id="PS01302">
    <property type="entry name" value="UPF0758"/>
    <property type="match status" value="1"/>
</dbReference>
<keyword id="KW-0378">Hydrolase</keyword>
<keyword id="KW-0479">Metal-binding</keyword>
<keyword id="KW-0482">Metalloprotease</keyword>
<keyword id="KW-0645">Protease</keyword>
<keyword id="KW-0862">Zinc</keyword>
<accession>B1IBM8</accession>
<sequence>MYSISFQEDSLLPRERLAKEGVEALSNQELLAILLRTGTRQASVFEIAQKVLNNLSSLTDLKKMTLQELQSLSGIGRVKAIELQAMIELGHRIHKHETLEMESILSSQKLAKKMQQELGDKKQEHLVALYLNTQNQIIHQQTIFIGSVTRSIAEPREILHYAIKHMATSLILVHNHPSGAVAPSQNDDHVTKLVKEACELMGIVLLDHLIVSHSNYFSYREKTDLI</sequence>
<evidence type="ECO:0000255" key="1">
    <source>
        <dbReference type="PROSITE-ProRule" id="PRU01182"/>
    </source>
</evidence>
<evidence type="ECO:0000305" key="2"/>
<protein>
    <recommendedName>
        <fullName>UPF0758 protein SPH_1181</fullName>
    </recommendedName>
</protein>
<organism>
    <name type="scientific">Streptococcus pneumoniae (strain Hungary19A-6)</name>
    <dbReference type="NCBI Taxonomy" id="487214"/>
    <lineage>
        <taxon>Bacteria</taxon>
        <taxon>Bacillati</taxon>
        <taxon>Bacillota</taxon>
        <taxon>Bacilli</taxon>
        <taxon>Lactobacillales</taxon>
        <taxon>Streptococcaceae</taxon>
        <taxon>Streptococcus</taxon>
    </lineage>
</organism>
<name>Y1181_STRPI</name>
<comment type="similarity">
    <text evidence="2">Belongs to the UPF0758 family.</text>
</comment>